<evidence type="ECO:0000255" key="1"/>
<evidence type="ECO:0000256" key="2">
    <source>
        <dbReference type="SAM" id="MobiDB-lite"/>
    </source>
</evidence>
<evidence type="ECO:0000269" key="3">
    <source>
    </source>
</evidence>
<evidence type="ECO:0000269" key="4">
    <source>
    </source>
</evidence>
<evidence type="ECO:0000269" key="5">
    <source>
    </source>
</evidence>
<evidence type="ECO:0000269" key="6">
    <source>
    </source>
</evidence>
<evidence type="ECO:0000269" key="7">
    <source>
    </source>
</evidence>
<evidence type="ECO:0000269" key="8">
    <source>
    </source>
</evidence>
<evidence type="ECO:0000269" key="9">
    <source>
    </source>
</evidence>
<evidence type="ECO:0000269" key="10">
    <source>
    </source>
</evidence>
<evidence type="ECO:0000269" key="11">
    <source>
    </source>
</evidence>
<evidence type="ECO:0000269" key="12">
    <source>
    </source>
</evidence>
<evidence type="ECO:0000269" key="13">
    <source>
    </source>
</evidence>
<evidence type="ECO:0000269" key="14">
    <source>
    </source>
</evidence>
<evidence type="ECO:0000269" key="15">
    <source>
    </source>
</evidence>
<evidence type="ECO:0000269" key="16">
    <source>
    </source>
</evidence>
<evidence type="ECO:0000269" key="17">
    <source>
    </source>
</evidence>
<evidence type="ECO:0000303" key="18">
    <source>
    </source>
</evidence>
<evidence type="ECO:0000303" key="19">
    <source>
    </source>
</evidence>
<evidence type="ECO:0000305" key="20"/>
<evidence type="ECO:0007744" key="21">
    <source>
    </source>
</evidence>
<evidence type="ECO:0007744" key="22">
    <source>
    </source>
</evidence>
<evidence type="ECO:0007744" key="23">
    <source>
    </source>
</evidence>
<evidence type="ECO:0007744" key="24">
    <source>
    </source>
</evidence>
<evidence type="ECO:0007744" key="25">
    <source>
    </source>
</evidence>
<evidence type="ECO:0007829" key="26">
    <source>
        <dbReference type="PDB" id="2GD5"/>
    </source>
</evidence>
<evidence type="ECO:0007829" key="27">
    <source>
        <dbReference type="PDB" id="2XZE"/>
    </source>
</evidence>
<evidence type="ECO:0007829" key="28">
    <source>
        <dbReference type="PDB" id="7ZCG"/>
    </source>
</evidence>
<accession>Q9Y3E7</accession>
<accession>A8K3W0</accession>
<accession>B4DG34</accession>
<accession>B8ZZM0</accession>
<accession>B8ZZX5</accession>
<accession>Q3ZTS9</accession>
<accession>Q53S71</accession>
<accession>Q53SU5</accession>
<accession>Q9NZ51</accession>
<proteinExistence type="evidence at protein level"/>
<dbReference type="EMBL" id="AF219226">
    <property type="protein sequence ID" value="AAF26737.1"/>
    <property type="molecule type" value="mRNA"/>
</dbReference>
<dbReference type="EMBL" id="AY364249">
    <property type="protein sequence ID" value="AAQ76808.1"/>
    <property type="molecule type" value="mRNA"/>
</dbReference>
<dbReference type="EMBL" id="AF151907">
    <property type="protein sequence ID" value="AAD34144.1"/>
    <property type="molecule type" value="mRNA"/>
</dbReference>
<dbReference type="EMBL" id="AK290725">
    <property type="protein sequence ID" value="BAF83414.1"/>
    <property type="molecule type" value="mRNA"/>
</dbReference>
<dbReference type="EMBL" id="AK294389">
    <property type="protein sequence ID" value="BAG57645.1"/>
    <property type="molecule type" value="mRNA"/>
</dbReference>
<dbReference type="EMBL" id="AK312353">
    <property type="protein sequence ID" value="BAG35273.1"/>
    <property type="molecule type" value="mRNA"/>
</dbReference>
<dbReference type="EMBL" id="AK315835">
    <property type="protein sequence ID" value="BAF98726.1"/>
    <property type="molecule type" value="mRNA"/>
</dbReference>
<dbReference type="EMBL" id="AC015971">
    <property type="protein sequence ID" value="AAX93078.1"/>
    <property type="molecule type" value="Genomic_DNA"/>
</dbReference>
<dbReference type="EMBL" id="AC064848">
    <property type="status" value="NOT_ANNOTATED_CDS"/>
    <property type="molecule type" value="Genomic_DNA"/>
</dbReference>
<dbReference type="EMBL" id="AC068288">
    <property type="protein sequence ID" value="AAY24211.1"/>
    <property type="molecule type" value="Genomic_DNA"/>
</dbReference>
<dbReference type="EMBL" id="CH471053">
    <property type="protein sequence ID" value="EAW99448.1"/>
    <property type="molecule type" value="Genomic_DNA"/>
</dbReference>
<dbReference type="EMBL" id="CH471053">
    <property type="protein sequence ID" value="EAW99449.1"/>
    <property type="molecule type" value="Genomic_DNA"/>
</dbReference>
<dbReference type="EMBL" id="CH471053">
    <property type="protein sequence ID" value="EAW99450.1"/>
    <property type="molecule type" value="Genomic_DNA"/>
</dbReference>
<dbReference type="EMBL" id="CH471053">
    <property type="protein sequence ID" value="EAW99451.1"/>
    <property type="molecule type" value="Genomic_DNA"/>
</dbReference>
<dbReference type="EMBL" id="BC004419">
    <property type="protein sequence ID" value="AAH04419.1"/>
    <property type="molecule type" value="mRNA"/>
</dbReference>
<dbReference type="CCDS" id="CCDS33236.1">
    <molecule id="Q9Y3E7-1"/>
</dbReference>
<dbReference type="CCDS" id="CCDS42707.1">
    <molecule id="Q9Y3E7-2"/>
</dbReference>
<dbReference type="CCDS" id="CCDS54375.1">
    <molecule id="Q9Y3E7-4"/>
</dbReference>
<dbReference type="RefSeq" id="NP_001005753.1">
    <molecule id="Q9Y3E7-2"/>
    <property type="nucleotide sequence ID" value="NM_001005753.3"/>
</dbReference>
<dbReference type="RefSeq" id="NP_001180446.1">
    <molecule id="Q9Y3E7-4"/>
    <property type="nucleotide sequence ID" value="NM_001193517.2"/>
</dbReference>
<dbReference type="RefSeq" id="NP_001185883.1">
    <molecule id="Q9Y3E7-3"/>
    <property type="nucleotide sequence ID" value="NM_001198954.1"/>
</dbReference>
<dbReference type="RefSeq" id="NP_057163.1">
    <molecule id="Q9Y3E7-1"/>
    <property type="nucleotide sequence ID" value="NM_016079.4"/>
</dbReference>
<dbReference type="PDB" id="2GD5">
    <property type="method" value="X-ray"/>
    <property type="resolution" value="2.80 A"/>
    <property type="chains" value="A/B/C/D=9-183"/>
</dbReference>
<dbReference type="PDB" id="2XZE">
    <property type="method" value="X-ray"/>
    <property type="resolution" value="1.75 A"/>
    <property type="chains" value="Q/R=183-222"/>
</dbReference>
<dbReference type="PDB" id="3FRT">
    <property type="method" value="X-ray"/>
    <property type="resolution" value="4.00 A"/>
    <property type="chains" value="A/B=8-222"/>
</dbReference>
<dbReference type="PDB" id="3FRV">
    <property type="method" value="X-ray"/>
    <property type="resolution" value="3.70 A"/>
    <property type="chains" value="A=1-150"/>
</dbReference>
<dbReference type="PDB" id="7ZCG">
    <property type="method" value="EM"/>
    <property type="resolution" value="3.30 A"/>
    <property type="chains" value="A=11-169"/>
</dbReference>
<dbReference type="PDB" id="7ZCH">
    <property type="method" value="EM"/>
    <property type="resolution" value="3.60 A"/>
    <property type="chains" value="A=11-169"/>
</dbReference>
<dbReference type="PDBsum" id="2GD5"/>
<dbReference type="PDBsum" id="2XZE"/>
<dbReference type="PDBsum" id="3FRT"/>
<dbReference type="PDBsum" id="3FRV"/>
<dbReference type="PDBsum" id="7ZCG"/>
<dbReference type="PDBsum" id="7ZCH"/>
<dbReference type="EMDB" id="EMD-14630"/>
<dbReference type="EMDB" id="EMD-14631"/>
<dbReference type="SMR" id="Q9Y3E7"/>
<dbReference type="BioGRID" id="119660">
    <property type="interactions" value="70"/>
</dbReference>
<dbReference type="BioGRID" id="1529307">
    <property type="interactions" value="2"/>
</dbReference>
<dbReference type="ComplexPortal" id="CPX-329">
    <property type="entry name" value="ESCRT-III complex"/>
</dbReference>
<dbReference type="CORUM" id="Q9Y3E7"/>
<dbReference type="DIP" id="DIP-48532N"/>
<dbReference type="FunCoup" id="Q9Y3E7">
    <property type="interactions" value="2356"/>
</dbReference>
<dbReference type="IntAct" id="Q9Y3E7">
    <property type="interactions" value="64"/>
</dbReference>
<dbReference type="MINT" id="Q9Y3E7"/>
<dbReference type="STRING" id="9606.ENSP00000263856"/>
<dbReference type="iPTMnet" id="Q9Y3E7"/>
<dbReference type="MetOSite" id="Q9Y3E7"/>
<dbReference type="PhosphoSitePlus" id="Q9Y3E7"/>
<dbReference type="BioMuta" id="CHMP3"/>
<dbReference type="DMDM" id="73917763"/>
<dbReference type="jPOST" id="Q9Y3E7"/>
<dbReference type="MassIVE" id="Q9Y3E7"/>
<dbReference type="PaxDb" id="9606-ENSP00000405575"/>
<dbReference type="PeptideAtlas" id="Q9Y3E7"/>
<dbReference type="ProteomicsDB" id="86031">
    <molecule id="Q9Y3E7-1"/>
</dbReference>
<dbReference type="ProteomicsDB" id="86032">
    <molecule id="Q9Y3E7-2"/>
</dbReference>
<dbReference type="ProteomicsDB" id="86033">
    <molecule id="Q9Y3E7-3"/>
</dbReference>
<dbReference type="ProteomicsDB" id="86034">
    <molecule id="Q9Y3E7-4"/>
</dbReference>
<dbReference type="Pumba" id="Q9Y3E7"/>
<dbReference type="Antibodypedia" id="17073">
    <property type="antibodies" value="102 antibodies from 23 providers"/>
</dbReference>
<dbReference type="DNASU" id="51652"/>
<dbReference type="Ensembl" id="ENST00000263856.9">
    <molecule id="Q9Y3E7-1"/>
    <property type="protein sequence ID" value="ENSP00000263856.4"/>
    <property type="gene ID" value="ENSG00000115561.16"/>
</dbReference>
<dbReference type="Ensembl" id="ENST00000409225.2">
    <molecule id="Q9Y3E7-2"/>
    <property type="protein sequence ID" value="ENSP00000386590.2"/>
    <property type="gene ID" value="ENSG00000115561.16"/>
</dbReference>
<dbReference type="Ensembl" id="ENST00000409727.5">
    <molecule id="Q9Y3E7-4"/>
    <property type="protein sequence ID" value="ENSP00000387045.1"/>
    <property type="gene ID" value="ENSG00000115561.16"/>
</dbReference>
<dbReference type="GeneID" id="100526767"/>
<dbReference type="GeneID" id="51652"/>
<dbReference type="KEGG" id="hsa:100526767"/>
<dbReference type="KEGG" id="hsa:51652"/>
<dbReference type="MANE-Select" id="ENST00000263856.9">
    <property type="protein sequence ID" value="ENSP00000263856.4"/>
    <property type="RefSeq nucleotide sequence ID" value="NM_016079.4"/>
    <property type="RefSeq protein sequence ID" value="NP_057163.1"/>
</dbReference>
<dbReference type="UCSC" id="uc002srj.4">
    <molecule id="Q9Y3E7-1"/>
    <property type="organism name" value="human"/>
</dbReference>
<dbReference type="AGR" id="HGNC:29865"/>
<dbReference type="AGR" id="HGNC:38847"/>
<dbReference type="CTD" id="100526767"/>
<dbReference type="CTD" id="51652"/>
<dbReference type="DisGeNET" id="100526767"/>
<dbReference type="DisGeNET" id="51652"/>
<dbReference type="GeneCards" id="CHMP3"/>
<dbReference type="HGNC" id="HGNC:29865">
    <property type="gene designation" value="CHMP3"/>
</dbReference>
<dbReference type="HPA" id="ENSG00000115561">
    <property type="expression patterns" value="Low tissue specificity"/>
</dbReference>
<dbReference type="MIM" id="610052">
    <property type="type" value="gene"/>
</dbReference>
<dbReference type="neXtProt" id="NX_Q9Y3E7"/>
<dbReference type="OpenTargets" id="ENSG00000115561"/>
<dbReference type="OpenTargets" id="ENSG00000249884"/>
<dbReference type="PharmGKB" id="PA134920495"/>
<dbReference type="VEuPathDB" id="HostDB:ENSG00000115561"/>
<dbReference type="eggNOG" id="KOG0800">
    <property type="taxonomic scope" value="Eukaryota"/>
</dbReference>
<dbReference type="eggNOG" id="KOG3229">
    <property type="taxonomic scope" value="Eukaryota"/>
</dbReference>
<dbReference type="GeneTree" id="ENSGT00950000182832"/>
<dbReference type="HOGENOM" id="CLU_069208_0_1_1"/>
<dbReference type="InParanoid" id="Q9Y3E7"/>
<dbReference type="OMA" id="KILWEVT"/>
<dbReference type="OrthoDB" id="2329734at2759"/>
<dbReference type="PAN-GO" id="Q9Y3E7">
    <property type="GO annotations" value="5 GO annotations based on evolutionary models"/>
</dbReference>
<dbReference type="PhylomeDB" id="Q9Y3E7"/>
<dbReference type="TreeFam" id="TF105848"/>
<dbReference type="PathwayCommons" id="Q9Y3E7"/>
<dbReference type="Reactome" id="R-HSA-162588">
    <property type="pathway name" value="Budding and maturation of HIV virion"/>
</dbReference>
<dbReference type="Reactome" id="R-HSA-1632852">
    <property type="pathway name" value="Macroautophagy"/>
</dbReference>
<dbReference type="Reactome" id="R-HSA-5620971">
    <property type="pathway name" value="Pyroptosis"/>
</dbReference>
<dbReference type="Reactome" id="R-HSA-917729">
    <property type="pathway name" value="Endosomal Sorting Complex Required For Transport (ESCRT)"/>
</dbReference>
<dbReference type="Reactome" id="R-HSA-9610379">
    <property type="pathway name" value="HCMV Late Events"/>
</dbReference>
<dbReference type="Reactome" id="R-HSA-9615710">
    <property type="pathway name" value="Late endosomal microautophagy"/>
</dbReference>
<dbReference type="Reactome" id="R-HSA-9668328">
    <property type="pathway name" value="Sealing of the nuclear envelope (NE) by ESCRT-III"/>
</dbReference>
<dbReference type="Reactome" id="R-HSA-9679504">
    <property type="pathway name" value="Translation of Replicase and Assembly of the Replication Transcription Complex"/>
</dbReference>
<dbReference type="Reactome" id="R-HSA-9694676">
    <property type="pathway name" value="Translation of Replicase and Assembly of the Replication Transcription Complex"/>
</dbReference>
<dbReference type="SignaLink" id="Q9Y3E7"/>
<dbReference type="SIGNOR" id="Q9Y3E7"/>
<dbReference type="BioGRID-ORCS" id="100526767">
    <property type="hits" value="170 hits in 623 CRISPR screens"/>
</dbReference>
<dbReference type="BioGRID-ORCS" id="51652">
    <property type="hits" value="510 hits in 1144 CRISPR screens"/>
</dbReference>
<dbReference type="CD-CODE" id="8C2F96ED">
    <property type="entry name" value="Centrosome"/>
</dbReference>
<dbReference type="EvolutionaryTrace" id="Q9Y3E7"/>
<dbReference type="GeneWiki" id="VPS24"/>
<dbReference type="Pharos" id="Q9Y3E7">
    <property type="development level" value="Tbio"/>
</dbReference>
<dbReference type="PRO" id="PR:Q9Y3E7"/>
<dbReference type="Proteomes" id="UP000005640">
    <property type="component" value="Chromosome 2"/>
</dbReference>
<dbReference type="RNAct" id="Q9Y3E7">
    <property type="molecule type" value="protein"/>
</dbReference>
<dbReference type="Bgee" id="ENSG00000115561">
    <property type="expression patterns" value="Expressed in calcaneal tendon and 209 other cell types or tissues"/>
</dbReference>
<dbReference type="GO" id="GO:1904930">
    <property type="term" value="C:amphisome membrane"/>
    <property type="evidence" value="ECO:0000314"/>
    <property type="project" value="ComplexPortal"/>
</dbReference>
<dbReference type="GO" id="GO:0000421">
    <property type="term" value="C:autophagosome membrane"/>
    <property type="evidence" value="ECO:0000314"/>
    <property type="project" value="ComplexPortal"/>
</dbReference>
<dbReference type="GO" id="GO:0031410">
    <property type="term" value="C:cytoplasmic vesicle"/>
    <property type="evidence" value="ECO:0000314"/>
    <property type="project" value="UniProtKB"/>
</dbReference>
<dbReference type="GO" id="GO:0005829">
    <property type="term" value="C:cytosol"/>
    <property type="evidence" value="ECO:0000304"/>
    <property type="project" value="Reactome"/>
</dbReference>
<dbReference type="GO" id="GO:0005769">
    <property type="term" value="C:early endosome"/>
    <property type="evidence" value="ECO:0007669"/>
    <property type="project" value="Ensembl"/>
</dbReference>
<dbReference type="GO" id="GO:0000815">
    <property type="term" value="C:ESCRT III complex"/>
    <property type="evidence" value="ECO:0000314"/>
    <property type="project" value="UniProtKB"/>
</dbReference>
<dbReference type="GO" id="GO:0070062">
    <property type="term" value="C:extracellular exosome"/>
    <property type="evidence" value="ECO:0007005"/>
    <property type="project" value="UniProtKB"/>
</dbReference>
<dbReference type="GO" id="GO:0000776">
    <property type="term" value="C:kinetochore"/>
    <property type="evidence" value="ECO:0000314"/>
    <property type="project" value="ComplexPortal"/>
</dbReference>
<dbReference type="GO" id="GO:0005828">
    <property type="term" value="C:kinetochore microtubule"/>
    <property type="evidence" value="ECO:0000314"/>
    <property type="project" value="ComplexPortal"/>
</dbReference>
<dbReference type="GO" id="GO:0005770">
    <property type="term" value="C:late endosome"/>
    <property type="evidence" value="ECO:0000314"/>
    <property type="project" value="ParkinsonsUK-UCL"/>
</dbReference>
<dbReference type="GO" id="GO:0005765">
    <property type="term" value="C:lysosomal membrane"/>
    <property type="evidence" value="ECO:0000314"/>
    <property type="project" value="ComplexPortal"/>
</dbReference>
<dbReference type="GO" id="GO:0030496">
    <property type="term" value="C:midbody"/>
    <property type="evidence" value="ECO:0000314"/>
    <property type="project" value="ComplexPortal"/>
</dbReference>
<dbReference type="GO" id="GO:0005771">
    <property type="term" value="C:multivesicular body"/>
    <property type="evidence" value="ECO:0000318"/>
    <property type="project" value="GO_Central"/>
</dbReference>
<dbReference type="GO" id="GO:0032585">
    <property type="term" value="C:multivesicular body membrane"/>
    <property type="evidence" value="ECO:0000314"/>
    <property type="project" value="ComplexPortal"/>
</dbReference>
<dbReference type="GO" id="GO:0005643">
    <property type="term" value="C:nuclear pore"/>
    <property type="evidence" value="ECO:0000314"/>
    <property type="project" value="ComplexPortal"/>
</dbReference>
<dbReference type="GO" id="GO:0005886">
    <property type="term" value="C:plasma membrane"/>
    <property type="evidence" value="ECO:0000314"/>
    <property type="project" value="UniProtKB"/>
</dbReference>
<dbReference type="GO" id="GO:0042802">
    <property type="term" value="F:identical protein binding"/>
    <property type="evidence" value="ECO:0000353"/>
    <property type="project" value="IntAct"/>
</dbReference>
<dbReference type="GO" id="GO:0140678">
    <property type="term" value="F:molecular function inhibitor activity"/>
    <property type="evidence" value="ECO:0000269"/>
    <property type="project" value="DisProt"/>
</dbReference>
<dbReference type="GO" id="GO:0031210">
    <property type="term" value="F:phosphatidylcholine binding"/>
    <property type="evidence" value="ECO:0000315"/>
    <property type="project" value="UniProtKB"/>
</dbReference>
<dbReference type="GO" id="GO:0005546">
    <property type="term" value="F:phosphatidylinositol-4,5-bisphosphate binding"/>
    <property type="evidence" value="ECO:0007669"/>
    <property type="project" value="Ensembl"/>
</dbReference>
<dbReference type="GO" id="GO:1990381">
    <property type="term" value="F:ubiquitin-specific protease binding"/>
    <property type="evidence" value="ECO:0000353"/>
    <property type="project" value="UniProtKB"/>
</dbReference>
<dbReference type="GO" id="GO:0006915">
    <property type="term" value="P:apoptotic process"/>
    <property type="evidence" value="ECO:0007669"/>
    <property type="project" value="UniProtKB-KW"/>
</dbReference>
<dbReference type="GO" id="GO:0097352">
    <property type="term" value="P:autophagosome maturation"/>
    <property type="evidence" value="ECO:0000315"/>
    <property type="project" value="ComplexPortal"/>
</dbReference>
<dbReference type="GO" id="GO:0006914">
    <property type="term" value="P:autophagy"/>
    <property type="evidence" value="ECO:0000315"/>
    <property type="project" value="ComplexPortal"/>
</dbReference>
<dbReference type="GO" id="GO:0032509">
    <property type="term" value="P:endosome transport via multivesicular body sorting pathway"/>
    <property type="evidence" value="ECO:0000318"/>
    <property type="project" value="GO_Central"/>
</dbReference>
<dbReference type="GO" id="GO:1902774">
    <property type="term" value="P:late endosome to lysosome transport"/>
    <property type="evidence" value="ECO:0000315"/>
    <property type="project" value="ComplexPortal"/>
</dbReference>
<dbReference type="GO" id="GO:0045324">
    <property type="term" value="P:late endosome to vacuole transport"/>
    <property type="evidence" value="ECO:0000318"/>
    <property type="project" value="GO_Central"/>
</dbReference>
<dbReference type="GO" id="GO:0016236">
    <property type="term" value="P:macroautophagy"/>
    <property type="evidence" value="ECO:0000304"/>
    <property type="project" value="ParkinsonsUK-UCL"/>
</dbReference>
<dbReference type="GO" id="GO:0090148">
    <property type="term" value="P:membrane fission"/>
    <property type="evidence" value="ECO:0000303"/>
    <property type="project" value="ComplexPortal"/>
</dbReference>
<dbReference type="GO" id="GO:0061952">
    <property type="term" value="P:midbody abscission"/>
    <property type="evidence" value="ECO:0000315"/>
    <property type="project" value="UniProtKB"/>
</dbReference>
<dbReference type="GO" id="GO:0007080">
    <property type="term" value="P:mitotic metaphase chromosome alignment"/>
    <property type="evidence" value="ECO:0000315"/>
    <property type="project" value="ComplexPortal"/>
</dbReference>
<dbReference type="GO" id="GO:0036258">
    <property type="term" value="P:multivesicular body assembly"/>
    <property type="evidence" value="ECO:0000304"/>
    <property type="project" value="ParkinsonsUK-UCL"/>
</dbReference>
<dbReference type="GO" id="GO:0071985">
    <property type="term" value="P:multivesicular body sorting pathway"/>
    <property type="evidence" value="ECO:0000314"/>
    <property type="project" value="ComplexPortal"/>
</dbReference>
<dbReference type="GO" id="GO:0061763">
    <property type="term" value="P:multivesicular body-lysosome fusion"/>
    <property type="evidence" value="ECO:0000315"/>
    <property type="project" value="ParkinsonsUK-UCL"/>
</dbReference>
<dbReference type="GO" id="GO:0031468">
    <property type="term" value="P:nuclear membrane reassembly"/>
    <property type="evidence" value="ECO:0000315"/>
    <property type="project" value="ComplexPortal"/>
</dbReference>
<dbReference type="GO" id="GO:0006997">
    <property type="term" value="P:nucleus organization"/>
    <property type="evidence" value="ECO:0000315"/>
    <property type="project" value="ComplexPortal"/>
</dbReference>
<dbReference type="GO" id="GO:0001778">
    <property type="term" value="P:plasma membrane repair"/>
    <property type="evidence" value="ECO:0000314"/>
    <property type="project" value="ComplexPortal"/>
</dbReference>
<dbReference type="GO" id="GO:0032467">
    <property type="term" value="P:positive regulation of cytokinesis"/>
    <property type="evidence" value="ECO:0007669"/>
    <property type="project" value="Ensembl"/>
</dbReference>
<dbReference type="GO" id="GO:0051258">
    <property type="term" value="P:protein polymerization"/>
    <property type="evidence" value="ECO:0000314"/>
    <property type="project" value="UniProtKB"/>
</dbReference>
<dbReference type="GO" id="GO:0015031">
    <property type="term" value="P:protein transport"/>
    <property type="evidence" value="ECO:0000318"/>
    <property type="project" value="GO_Central"/>
</dbReference>
<dbReference type="GO" id="GO:0010824">
    <property type="term" value="P:regulation of centrosome duplication"/>
    <property type="evidence" value="ECO:0000315"/>
    <property type="project" value="UniProtKB"/>
</dbReference>
<dbReference type="GO" id="GO:2000641">
    <property type="term" value="P:regulation of early endosome to late endosome transport"/>
    <property type="evidence" value="ECO:0000315"/>
    <property type="project" value="ParkinsonsUK-UCL"/>
</dbReference>
<dbReference type="GO" id="GO:0051036">
    <property type="term" value="P:regulation of endosome size"/>
    <property type="evidence" value="ECO:0007669"/>
    <property type="project" value="Ensembl"/>
</dbReference>
<dbReference type="GO" id="GO:1901673">
    <property type="term" value="P:regulation of mitotic spindle assembly"/>
    <property type="evidence" value="ECO:0000315"/>
    <property type="project" value="ComplexPortal"/>
</dbReference>
<dbReference type="GO" id="GO:0044790">
    <property type="term" value="P:suppression of viral release by host"/>
    <property type="evidence" value="ECO:0000315"/>
    <property type="project" value="UniProtKB"/>
</dbReference>
<dbReference type="GO" id="GO:0043162">
    <property type="term" value="P:ubiquitin-dependent protein catabolic process via the multivesicular body sorting pathway"/>
    <property type="evidence" value="ECO:0000314"/>
    <property type="project" value="ComplexPortal"/>
</dbReference>
<dbReference type="GO" id="GO:0051469">
    <property type="term" value="P:vesicle fusion with vacuole"/>
    <property type="evidence" value="ECO:0000303"/>
    <property type="project" value="ComplexPortal"/>
</dbReference>
<dbReference type="GO" id="GO:0046761">
    <property type="term" value="P:viral budding from plasma membrane"/>
    <property type="evidence" value="ECO:0000314"/>
    <property type="project" value="ComplexPortal"/>
</dbReference>
<dbReference type="GO" id="GO:0039702">
    <property type="term" value="P:viral budding via host ESCRT complex"/>
    <property type="evidence" value="ECO:0000314"/>
    <property type="project" value="UniProtKB"/>
</dbReference>
<dbReference type="GO" id="GO:0019076">
    <property type="term" value="P:viral release from host cell"/>
    <property type="evidence" value="ECO:0000315"/>
    <property type="project" value="UniProtKB"/>
</dbReference>
<dbReference type="DisProt" id="DP01283"/>
<dbReference type="Gene3D" id="6.10.140.1230">
    <property type="match status" value="1"/>
</dbReference>
<dbReference type="IDEAL" id="IID00230"/>
<dbReference type="InterPro" id="IPR005024">
    <property type="entry name" value="Snf7_fam"/>
</dbReference>
<dbReference type="PANTHER" id="PTHR10476">
    <property type="entry name" value="CHARGED MULTIVESICULAR BODY PROTEIN"/>
    <property type="match status" value="1"/>
</dbReference>
<dbReference type="Pfam" id="PF03357">
    <property type="entry name" value="Snf7"/>
    <property type="match status" value="1"/>
</dbReference>
<protein>
    <recommendedName>
        <fullName>Charged multivesicular body protein 3</fullName>
    </recommendedName>
    <alternativeName>
        <fullName>Chromatin-modifying protein 3</fullName>
    </alternativeName>
    <alternativeName>
        <fullName>Neuroendocrine differentiation factor</fullName>
    </alternativeName>
    <alternativeName>
        <fullName>Vacuolar protein sorting-associated protein 24</fullName>
        <shortName>hVps24</shortName>
    </alternativeName>
</protein>
<sequence>MGLFGKTQEKPPKELVNEWSLKIRKEMRVVDRQIRDIQREEEKVKRSVKDAAKKGQKDVCIVLAKEMIRSRKAVSKLYASKAHMNSVLMGMKNQLAVLRVAGSLQKSTEVMKAMQSLVKIPEIQATMRELSKEMMKAGIIEEMLEDTFESMDDQEEMEEEAEMEIDRILFEITAGALGKAPSKVTDALPEPEPPGAMAASEDEEEEEEALEAMQSRLATLRS</sequence>
<feature type="initiator methionine" description="Removed" evidence="1">
    <location>
        <position position="1"/>
    </location>
</feature>
<feature type="chain" id="PRO_0000211479" description="Charged multivesicular body protein 3">
    <location>
        <begin position="2"/>
        <end position="222"/>
    </location>
</feature>
<feature type="region of interest" description="Intramolecular interaction with C-terminus">
    <location>
        <begin position="2"/>
        <end position="113"/>
    </location>
</feature>
<feature type="region of interest" description="Important for autoinhibitory function">
    <location>
        <begin position="59"/>
        <end position="64"/>
    </location>
</feature>
<feature type="region of interest" description="Interaction with VPS4A">
    <location>
        <begin position="151"/>
        <end position="222"/>
    </location>
</feature>
<feature type="region of interest" description="Intramolecular interaction with N-terminus">
    <location>
        <begin position="151"/>
        <end position="220"/>
    </location>
</feature>
<feature type="region of interest" description="Important for autoinhibitory function">
    <location>
        <begin position="168"/>
        <end position="169"/>
    </location>
</feature>
<feature type="region of interest" description="Disordered" evidence="2">
    <location>
        <begin position="180"/>
        <end position="222"/>
    </location>
</feature>
<feature type="region of interest" description="Interaction with STAMBP">
    <location>
        <begin position="203"/>
        <end position="207"/>
    </location>
</feature>
<feature type="region of interest" description="Interaction with STAMBP">
    <location>
        <begin position="221"/>
        <end position="222"/>
    </location>
</feature>
<feature type="coiled-coil region" evidence="1">
    <location>
        <begin position="22"/>
        <end position="54"/>
    </location>
</feature>
<feature type="coiled-coil region" evidence="1">
    <location>
        <begin position="141"/>
        <end position="222"/>
    </location>
</feature>
<feature type="short sequence motif" description="MIT-interacting motif">
    <location>
        <begin position="201"/>
        <end position="211"/>
    </location>
</feature>
<feature type="compositionally biased region" description="Acidic residues" evidence="2">
    <location>
        <begin position="200"/>
        <end position="210"/>
    </location>
</feature>
<feature type="site" description="Important for autoinhibitory function">
    <location>
        <position position="48"/>
    </location>
</feature>
<feature type="site" description="Interaction with STAMBP">
    <location>
        <position position="216"/>
    </location>
</feature>
<feature type="modified residue" description="Phosphoserine" evidence="21 22 23 24 25">
    <location>
        <position position="200"/>
    </location>
</feature>
<feature type="lipid moiety-binding region" description="N-myristoyl glycine" evidence="1">
    <location>
        <position position="2"/>
    </location>
</feature>
<feature type="cross-link" description="Glycyl lysine isopeptide (Lys-Gly) (interchain with G-Cter in ubiquitin)">
    <location>
        <position position="179"/>
    </location>
</feature>
<feature type="splice variant" id="VSP_041076" description="In isoform 2." evidence="18 19">
    <location>
        <begin position="1"/>
        <end position="66"/>
    </location>
</feature>
<feature type="splice variant" id="VSP_042124" description="In isoform 3." evidence="18">
    <original>MGLFGKTQEKPPKEL</original>
    <variation>MEGELYSALKEEEASESVSSTNFSGEMHFYELVEDTKDGIWLVQ</variation>
    <location>
        <begin position="1"/>
        <end position="15"/>
    </location>
</feature>
<feature type="splice variant" id="VSP_042125" description="In isoform 4." evidence="20">
    <location>
        <begin position="74"/>
        <end position="113"/>
    </location>
</feature>
<feature type="mutagenesis site" description="Impairs HIV-1 release; when associated with S-28." evidence="8">
    <original>RK</original>
    <variation>SA</variation>
    <location>
        <begin position="24"/>
        <end position="25"/>
    </location>
</feature>
<feature type="mutagenesis site" description="Impairs HIV-1 release; when associated with 24-S-A-25." evidence="8">
    <original>R</original>
    <variation>S</variation>
    <location>
        <position position="28"/>
    </location>
</feature>
<feature type="mutagenesis site" description="Induces assembly with CHMP2A into helical tubes in vitro; when associated with D-64. Enhances inhibition of HIV-1 budding in vivo; when associated with D-168 and D-169." evidence="15">
    <original>V</original>
    <variation>D</variation>
    <location>
        <position position="48"/>
    </location>
</feature>
<feature type="mutagenesis site" description="Abolishes dimerization; when associated with N-56; E-59 and 62-D-E-63." evidence="8">
    <original>K</original>
    <variation>S</variation>
    <location>
        <position position="54"/>
    </location>
</feature>
<feature type="mutagenesis site" description="Abolishes dimerization; when associated with S-54; E-59 and 62-D-E-63." evidence="8">
    <original>Q</original>
    <variation>N</variation>
    <location>
        <position position="56"/>
    </location>
</feature>
<feature type="mutagenesis site" description="Abolishes interaction with CHMP2A and assembly into helical tubes in vitro; when associated with D-62; D-168 and D-169." evidence="8 15">
    <original>V</original>
    <variation>D</variation>
    <location>
        <position position="59"/>
    </location>
</feature>
<feature type="mutagenesis site" description="Abolishes dimerization; when associated with S-54; N-56 and 62-D-E-63." evidence="8 15">
    <original>V</original>
    <variation>E</variation>
    <location>
        <position position="59"/>
    </location>
</feature>
<feature type="mutagenesis site" description="Abolishes dimerization; when associated with S-54; N-56 and E-59." evidence="8">
    <original>VL</original>
    <variation>DE</variation>
    <location>
        <begin position="62"/>
        <end position="63"/>
    </location>
</feature>
<feature type="mutagenesis site" description="Abolishes interaction with CHMP2A and assembly into helical tubes in vitro; when associated with D-59; D-168 and D-169." evidence="15">
    <original>V</original>
    <variation>D</variation>
    <location>
        <position position="62"/>
    </location>
</feature>
<feature type="mutagenesis site" description="Induces assembly with CHMP2A into helical tubes in vitro; when associated with D-48." evidence="15">
    <original>A</original>
    <variation>D</variation>
    <location>
        <position position="64"/>
    </location>
</feature>
<feature type="mutagenesis site" description="Abolishes dimerization." evidence="8">
    <original>YA</original>
    <variation>AE</variation>
    <location>
        <begin position="78"/>
        <end position="79"/>
    </location>
</feature>
<feature type="mutagenesis site" description="Induces assembly with CHMP2A into helical tubes in vitro and slightly enhances inhibition of HIV-1 budding in vivo. Abolishes interaction with CHMP2A and assembly into helical tubes in vitro; when associated with D-59 and D-62." evidence="15">
    <original>IL</original>
    <variation>DD</variation>
    <location>
        <begin position="168"/>
        <end position="169"/>
    </location>
</feature>
<feature type="mutagenesis site" description="Membrane association; releases autoinhibition." evidence="12">
    <location>
        <begin position="179"/>
        <end position="222"/>
    </location>
</feature>
<feature type="mutagenesis site" description="Abolishes interaction with VPS4A and STAMBP." evidence="9">
    <original>RL</original>
    <variation>AA</variation>
    <location>
        <begin position="216"/>
        <end position="217"/>
    </location>
</feature>
<feature type="mutagenesis site" description="Abolishes interaction with VPS4A and STAMBP." evidence="9">
    <location>
        <begin position="221"/>
        <end position="222"/>
    </location>
</feature>
<feature type="mutagenesis site" description="Impairs interaction with VPS4A and STAMBP." evidence="9">
    <location>
        <position position="222"/>
    </location>
</feature>
<feature type="sequence conflict" description="In Ref. 1; AAF26737." evidence="20" ref="1">
    <original>E</original>
    <variation>D</variation>
    <location>
        <position position="208"/>
    </location>
</feature>
<feature type="helix" evidence="26">
    <location>
        <begin position="15"/>
        <end position="53"/>
    </location>
</feature>
<feature type="helix" evidence="26">
    <location>
        <begin position="57"/>
        <end position="100"/>
    </location>
</feature>
<feature type="helix" evidence="26">
    <location>
        <begin position="109"/>
        <end position="112"/>
    </location>
</feature>
<feature type="turn" evidence="26">
    <location>
        <begin position="113"/>
        <end position="115"/>
    </location>
</feature>
<feature type="strand" evidence="28">
    <location>
        <begin position="116"/>
        <end position="118"/>
    </location>
</feature>
<feature type="strand" evidence="26">
    <location>
        <begin position="120"/>
        <end position="122"/>
    </location>
</feature>
<feature type="helix" evidence="26">
    <location>
        <begin position="125"/>
        <end position="137"/>
    </location>
</feature>
<feature type="helix" evidence="26">
    <location>
        <begin position="164"/>
        <end position="167"/>
    </location>
</feature>
<feature type="strand" evidence="26">
    <location>
        <begin position="175"/>
        <end position="177"/>
    </location>
</feature>
<feature type="helix" evidence="27">
    <location>
        <begin position="201"/>
        <end position="220"/>
    </location>
</feature>
<gene>
    <name type="primary">CHMP3</name>
    <name type="synonym">CGI149</name>
    <name type="synonym">NEDF</name>
    <name type="synonym">VPS24</name>
    <name type="ORF">CGI-149</name>
</gene>
<keyword id="KW-0002">3D-structure</keyword>
<keyword id="KW-0025">Alternative splicing</keyword>
<keyword id="KW-0053">Apoptosis</keyword>
<keyword id="KW-0131">Cell cycle</keyword>
<keyword id="KW-0132">Cell division</keyword>
<keyword id="KW-0175">Coiled coil</keyword>
<keyword id="KW-0963">Cytoplasm</keyword>
<keyword id="KW-0967">Endosome</keyword>
<keyword id="KW-1017">Isopeptide bond</keyword>
<keyword id="KW-0449">Lipoprotein</keyword>
<keyword id="KW-0472">Membrane</keyword>
<keyword id="KW-0519">Myristate</keyword>
<keyword id="KW-0597">Phosphoprotein</keyword>
<keyword id="KW-0653">Protein transport</keyword>
<keyword id="KW-1267">Proteomics identification</keyword>
<keyword id="KW-1185">Reference proteome</keyword>
<keyword id="KW-0813">Transport</keyword>
<keyword id="KW-0832">Ubl conjugation</keyword>
<organism>
    <name type="scientific">Homo sapiens</name>
    <name type="common">Human</name>
    <dbReference type="NCBI Taxonomy" id="9606"/>
    <lineage>
        <taxon>Eukaryota</taxon>
        <taxon>Metazoa</taxon>
        <taxon>Chordata</taxon>
        <taxon>Craniata</taxon>
        <taxon>Vertebrata</taxon>
        <taxon>Euteleostomi</taxon>
        <taxon>Mammalia</taxon>
        <taxon>Eutheria</taxon>
        <taxon>Euarchontoglires</taxon>
        <taxon>Primates</taxon>
        <taxon>Haplorrhini</taxon>
        <taxon>Catarrhini</taxon>
        <taxon>Hominidae</taxon>
        <taxon>Homo</taxon>
    </lineage>
</organism>
<comment type="function">
    <text evidence="3 6 8 11 13">Probable core component of the endosomal sorting required for transport complex III (ESCRT-III) which is involved in multivesicular bodies (MVBs) formation and sorting of endosomal cargo proteins into MVBs. MVBs contain intraluminal vesicles (ILVs) that are generated by invagination and scission from the limiting membrane of the endosome and mostly are delivered to lysosomes enabling degradation of membrane proteins, such as stimulated growth factor receptors, lysosomal enzymes and lipids. The MVB pathway appears to require the sequential function of ESCRT-O, -I,-II and -III complexes. ESCRT-III proteins mostly dissociate from the invaginating membrane before the ILV is released. The ESCRT machinery also functions in topologically equivalent membrane fission events, such as the terminal stages of cytokinesis and the budding of enveloped viruses (HIV-1 and other lentiviruses). ESCRT-III proteins are believed to mediate the necessary vesicle extrusion and/or membrane fission activities, possibly in conjunction with the AAA ATPase VPS4. Selectively binds to phosphatidylinositol 3,5-bisphosphate PtdIns(3,5)P2 and PtdIns(3,4)P2 in preference to other phosphoinositides tested. Involved in late stages of cytokinesis. Plays a role in endosomal sorting/trafficking of EGF receptor. Isoform 2 prevents stress-mediated cell death and accumulation of reactive oxygen species when expressed in yeast cells.</text>
</comment>
<comment type="subunit">
    <text evidence="3 4 7 8 9 10 12 14 15 16 17">Probable core component of the endosomal sorting required for transport complex III (ESCRT-III). ESCRT-III components are thought to multimerize to form a flat lattice on the perimeter membrane of the endosome. Several assembly forms of ESCRT-III may exist that interact and act sequentially. Forms a metastable monomer in solution; its core structure (without part of the putative autoinhibitory C-terminal acidic region) oligomerizes into a flat lattice via two different dimerization interfaces. In vitro, heteromerizes with CHMP2A (but not CHMP4) to form helical tubular structures that expose membrane-interacting sites on the outside whereas VPS4B can associate on the inside of the tubule. May interact with IGFBP7; the relevance of such interaction however remains unclear. Interacts with CHMP2A. Interacts with CHMP4A; the interaction requires the release of CHMP4A autoinhibition. Interacts with VPS4A. Interacts with STAMBP; the interaction appears to relieve the autoinhibition of CHMP3. Interacts with VTA1.</text>
</comment>
<comment type="interaction">
    <interactant intactId="EBI-2118119">
        <id>Q9Y3E7</id>
    </interactant>
    <interactant intactId="EBI-2692789">
        <id>O43633</id>
        <label>CHMP2A</label>
    </interactant>
    <organismsDiffer>false</organismsDiffer>
    <experiments>3</experiments>
</comment>
<comment type="interaction">
    <interactant intactId="EBI-2118119">
        <id>Q9Y3E7</id>
    </interactant>
    <interactant intactId="EBI-718324">
        <id>Q9UQN3</id>
        <label>CHMP2B</label>
    </interactant>
    <organismsDiffer>false</organismsDiffer>
    <experiments>2</experiments>
</comment>
<comment type="interaction">
    <interactant intactId="EBI-2118119">
        <id>Q9Y3E7</id>
    </interactant>
    <interactant intactId="EBI-749627">
        <id>Q9H444</id>
        <label>CHMP4B</label>
    </interactant>
    <organismsDiffer>false</organismsDiffer>
    <experiments>5</experiments>
</comment>
<comment type="interaction">
    <interactant intactId="EBI-2118119">
        <id>Q9Y3E7</id>
    </interactant>
    <interactant intactId="EBI-396676">
        <id>O95630</id>
        <label>STAMBP</label>
    </interactant>
    <organismsDiffer>false</organismsDiffer>
    <experiments>27</experiments>
</comment>
<comment type="interaction">
    <interactant intactId="EBI-15613847">
        <id>Q9Y3E7-1</id>
    </interactant>
    <interactant intactId="EBI-2692789">
        <id>O43633</id>
        <label>CHMP2A</label>
    </interactant>
    <organismsDiffer>false</organismsDiffer>
    <experiments>2</experiments>
</comment>
<comment type="interaction">
    <interactant intactId="EBI-15613847">
        <id>Q9Y3E7-1</id>
    </interactant>
    <interactant intactId="EBI-15613847">
        <id>Q9Y3E7-1</id>
        <label>CHMP3</label>
    </interactant>
    <organismsDiffer>false</organismsDiffer>
    <experiments>3</experiments>
</comment>
<comment type="interaction">
    <interactant intactId="EBI-15613847">
        <id>Q9Y3E7-1</id>
    </interactant>
    <interactant intactId="EBI-396676">
        <id>O95630</id>
        <label>STAMBP</label>
    </interactant>
    <organismsDiffer>false</organismsDiffer>
    <experiments>6</experiments>
</comment>
<comment type="subcellular location">
    <subcellularLocation>
        <location>Cytoplasm</location>
        <location>Cytosol</location>
    </subcellularLocation>
    <subcellularLocation>
        <location>Membrane</location>
        <topology>Lipid-anchor</topology>
    </subcellularLocation>
    <subcellularLocation>
        <location>Endosome</location>
    </subcellularLocation>
    <subcellularLocation>
        <location evidence="20">Late endosome membrane</location>
    </subcellularLocation>
    <text>Localizes to the midbody of dividing cells.</text>
</comment>
<comment type="alternative products">
    <event type="alternative splicing"/>
    <isoform>
        <id>Q9Y3E7-1</id>
        <name>1</name>
        <name>Vps24alpha</name>
        <sequence type="displayed"/>
    </isoform>
    <isoform>
        <id>Q9Y3E7-2</id>
        <name>2</name>
        <name>Vps24beta</name>
        <sequence type="described" ref="VSP_041076"/>
    </isoform>
    <isoform>
        <id>Q9Y3E7-3</id>
        <name>3</name>
        <sequence type="described" ref="VSP_042124"/>
    </isoform>
    <isoform>
        <id>Q9Y3E7-4</id>
        <name>4</name>
        <sequence type="described" ref="VSP_042125"/>
    </isoform>
</comment>
<comment type="tissue specificity">
    <text evidence="5">Widely expressed. Expressed in heart, brain, placenta, lung, liver, skeletal muscle, kidney and pancreas.</text>
</comment>
<comment type="domain">
    <text>The acidic C-terminus and the basic N-termminus are thought to render the protein in a closed, soluble and inactive conformation through an autoinhibitory intramolecular interaction. The open and active conformation, which enables membrane binding and oligomerization, is achieved by interaction with other cellular binding partners, probably including other ESCRT components.</text>
</comment>
<comment type="miscellaneous">
    <text>Its overexpression strongly inhibits HIV-1 release.</text>
</comment>
<comment type="similarity">
    <text evidence="20">Belongs to the SNF7 family.</text>
</comment>
<name>CHMP3_HUMAN</name>
<reference key="1">
    <citation type="journal article" date="2001" name="J. Clin. Endocrinol. Metab.">
        <title>Interaction of IGF-binding protein-related protein 1 with a novel protein, neuroendocrine differentiation factor, results in neuroendocrine differentiation of prostate cancer cells.</title>
        <authorList>
            <person name="Wilson E.M."/>
            <person name="Oh Y."/>
            <person name="Hwa V."/>
            <person name="Rosenfeld R.G."/>
        </authorList>
    </citation>
    <scope>NUCLEOTIDE SEQUENCE [MRNA] (ISOFORM 1)</scope>
    <scope>POSSIBLE INTERACTION WITH IGFBP7</scope>
</reference>
<reference key="2">
    <citation type="journal article" date="2005" name="Exp. Cell Res.">
        <title>mVps24p functions in EGF receptor sorting/trafficking from the early endosome.</title>
        <authorList>
            <person name="Yan Q."/>
            <person name="Hunt P.R."/>
            <person name="Frelin L."/>
            <person name="Vida T.A."/>
            <person name="Pevsner J."/>
            <person name="Bean A.J."/>
        </authorList>
    </citation>
    <scope>NUCLEOTIDE SEQUENCE [MRNA] (ISOFORM 1)</scope>
    <scope>FUNCTION</scope>
    <scope>SUBCELLULAR LOCATION</scope>
    <source>
        <tissue>Heart</tissue>
    </source>
</reference>
<reference key="3">
    <citation type="journal article" date="2006" name="BMC Genomics">
        <title>NovelFam3000 -- uncharacterized human protein domains conserved across model organisms.</title>
        <authorList>
            <person name="Kemmer D."/>
            <person name="Podowski R.M."/>
            <person name="Arenillas D."/>
            <person name="Lim J."/>
            <person name="Hodges E."/>
            <person name="Roth P."/>
            <person name="Sonnhammer E.L.L."/>
            <person name="Hoeoeg C."/>
            <person name="Wasserman W.W."/>
        </authorList>
    </citation>
    <scope>NUCLEOTIDE SEQUENCE [MRNA] (ISOFORM 1)</scope>
</reference>
<reference key="4">
    <citation type="journal article" date="2007" name="Gene">
        <title>Characterization of a novel alternatively spliced human transcript encoding an N-terminally truncated Vps24 protein that suppresses the effects of Bax in an ESCRT independent manner in yeast.</title>
        <authorList>
            <person name="Khoury C.M."/>
            <person name="Yang Z."/>
            <person name="Ismail S."/>
            <person name="Greenwood M.T."/>
        </authorList>
    </citation>
    <scope>NUCLEOTIDE SEQUENCE [MRNA] (ISOFORM 2)</scope>
    <scope>FUNCTION</scope>
    <source>
        <tissue>Heart</tissue>
    </source>
</reference>
<reference key="5">
    <citation type="journal article" date="2000" name="Genome Res.">
        <title>Identification of novel human genes evolutionarily conserved in Caenorhabditis elegans by comparative proteomics.</title>
        <authorList>
            <person name="Lai C.-H."/>
            <person name="Chou C.-Y."/>
            <person name="Ch'ang L.-Y."/>
            <person name="Liu C.-S."/>
            <person name="Lin W.-C."/>
        </authorList>
    </citation>
    <scope>NUCLEOTIDE SEQUENCE [LARGE SCALE MRNA] (ISOFORM 1)</scope>
</reference>
<reference key="6">
    <citation type="journal article" date="2004" name="Nat. Genet.">
        <title>Complete sequencing and characterization of 21,243 full-length human cDNAs.</title>
        <authorList>
            <person name="Ota T."/>
            <person name="Suzuki Y."/>
            <person name="Nishikawa T."/>
            <person name="Otsuki T."/>
            <person name="Sugiyama T."/>
            <person name="Irie R."/>
            <person name="Wakamatsu A."/>
            <person name="Hayashi K."/>
            <person name="Sato H."/>
            <person name="Nagai K."/>
            <person name="Kimura K."/>
            <person name="Makita H."/>
            <person name="Sekine M."/>
            <person name="Obayashi M."/>
            <person name="Nishi T."/>
            <person name="Shibahara T."/>
            <person name="Tanaka T."/>
            <person name="Ishii S."/>
            <person name="Yamamoto J."/>
            <person name="Saito K."/>
            <person name="Kawai Y."/>
            <person name="Isono Y."/>
            <person name="Nakamura Y."/>
            <person name="Nagahari K."/>
            <person name="Murakami K."/>
            <person name="Yasuda T."/>
            <person name="Iwayanagi T."/>
            <person name="Wagatsuma M."/>
            <person name="Shiratori A."/>
            <person name="Sudo H."/>
            <person name="Hosoiri T."/>
            <person name="Kaku Y."/>
            <person name="Kodaira H."/>
            <person name="Kondo H."/>
            <person name="Sugawara M."/>
            <person name="Takahashi M."/>
            <person name="Kanda K."/>
            <person name="Yokoi T."/>
            <person name="Furuya T."/>
            <person name="Kikkawa E."/>
            <person name="Omura Y."/>
            <person name="Abe K."/>
            <person name="Kamihara K."/>
            <person name="Katsuta N."/>
            <person name="Sato K."/>
            <person name="Tanikawa M."/>
            <person name="Yamazaki M."/>
            <person name="Ninomiya K."/>
            <person name="Ishibashi T."/>
            <person name="Yamashita H."/>
            <person name="Murakawa K."/>
            <person name="Fujimori K."/>
            <person name="Tanai H."/>
            <person name="Kimata M."/>
            <person name="Watanabe M."/>
            <person name="Hiraoka S."/>
            <person name="Chiba Y."/>
            <person name="Ishida S."/>
            <person name="Ono Y."/>
            <person name="Takiguchi S."/>
            <person name="Watanabe S."/>
            <person name="Yosida M."/>
            <person name="Hotuta T."/>
            <person name="Kusano J."/>
            <person name="Kanehori K."/>
            <person name="Takahashi-Fujii A."/>
            <person name="Hara H."/>
            <person name="Tanase T.-O."/>
            <person name="Nomura Y."/>
            <person name="Togiya S."/>
            <person name="Komai F."/>
            <person name="Hara R."/>
            <person name="Takeuchi K."/>
            <person name="Arita M."/>
            <person name="Imose N."/>
            <person name="Musashino K."/>
            <person name="Yuuki H."/>
            <person name="Oshima A."/>
            <person name="Sasaki N."/>
            <person name="Aotsuka S."/>
            <person name="Yoshikawa Y."/>
            <person name="Matsunawa H."/>
            <person name="Ichihara T."/>
            <person name="Shiohata N."/>
            <person name="Sano S."/>
            <person name="Moriya S."/>
            <person name="Momiyama H."/>
            <person name="Satoh N."/>
            <person name="Takami S."/>
            <person name="Terashima Y."/>
            <person name="Suzuki O."/>
            <person name="Nakagawa S."/>
            <person name="Senoh A."/>
            <person name="Mizoguchi H."/>
            <person name="Goto Y."/>
            <person name="Shimizu F."/>
            <person name="Wakebe H."/>
            <person name="Hishigaki H."/>
            <person name="Watanabe T."/>
            <person name="Sugiyama A."/>
            <person name="Takemoto M."/>
            <person name="Kawakami B."/>
            <person name="Yamazaki M."/>
            <person name="Watanabe K."/>
            <person name="Kumagai A."/>
            <person name="Itakura S."/>
            <person name="Fukuzumi Y."/>
            <person name="Fujimori Y."/>
            <person name="Komiyama M."/>
            <person name="Tashiro H."/>
            <person name="Tanigami A."/>
            <person name="Fujiwara T."/>
            <person name="Ono T."/>
            <person name="Yamada K."/>
            <person name="Fujii Y."/>
            <person name="Ozaki K."/>
            <person name="Hirao M."/>
            <person name="Ohmori Y."/>
            <person name="Kawabata A."/>
            <person name="Hikiji T."/>
            <person name="Kobatake N."/>
            <person name="Inagaki H."/>
            <person name="Ikema Y."/>
            <person name="Okamoto S."/>
            <person name="Okitani R."/>
            <person name="Kawakami T."/>
            <person name="Noguchi S."/>
            <person name="Itoh T."/>
            <person name="Shigeta K."/>
            <person name="Senba T."/>
            <person name="Matsumura K."/>
            <person name="Nakajima Y."/>
            <person name="Mizuno T."/>
            <person name="Morinaga M."/>
            <person name="Sasaki M."/>
            <person name="Togashi T."/>
            <person name="Oyama M."/>
            <person name="Hata H."/>
            <person name="Watanabe M."/>
            <person name="Komatsu T."/>
            <person name="Mizushima-Sugano J."/>
            <person name="Satoh T."/>
            <person name="Shirai Y."/>
            <person name="Takahashi Y."/>
            <person name="Nakagawa K."/>
            <person name="Okumura K."/>
            <person name="Nagase T."/>
            <person name="Nomura N."/>
            <person name="Kikuchi H."/>
            <person name="Masuho Y."/>
            <person name="Yamashita R."/>
            <person name="Nakai K."/>
            <person name="Yada T."/>
            <person name="Nakamura Y."/>
            <person name="Ohara O."/>
            <person name="Isogai T."/>
            <person name="Sugano S."/>
        </authorList>
    </citation>
    <scope>NUCLEOTIDE SEQUENCE [LARGE SCALE MRNA] (ISOFORMS 1; 2 AND 3)</scope>
    <source>
        <tissue>Amygdala</tissue>
        <tissue>Pericardium</tissue>
        <tissue>Synovial cell</tissue>
    </source>
</reference>
<reference key="7">
    <citation type="journal article" date="2005" name="Nature">
        <title>Generation and annotation of the DNA sequences of human chromosomes 2 and 4.</title>
        <authorList>
            <person name="Hillier L.W."/>
            <person name="Graves T.A."/>
            <person name="Fulton R.S."/>
            <person name="Fulton L.A."/>
            <person name="Pepin K.H."/>
            <person name="Minx P."/>
            <person name="Wagner-McPherson C."/>
            <person name="Layman D."/>
            <person name="Wylie K."/>
            <person name="Sekhon M."/>
            <person name="Becker M.C."/>
            <person name="Fewell G.A."/>
            <person name="Delehaunty K.D."/>
            <person name="Miner T.L."/>
            <person name="Nash W.E."/>
            <person name="Kremitzki C."/>
            <person name="Oddy L."/>
            <person name="Du H."/>
            <person name="Sun H."/>
            <person name="Bradshaw-Cordum H."/>
            <person name="Ali J."/>
            <person name="Carter J."/>
            <person name="Cordes M."/>
            <person name="Harris A."/>
            <person name="Isak A."/>
            <person name="van Brunt A."/>
            <person name="Nguyen C."/>
            <person name="Du F."/>
            <person name="Courtney L."/>
            <person name="Kalicki J."/>
            <person name="Ozersky P."/>
            <person name="Abbott S."/>
            <person name="Armstrong J."/>
            <person name="Belter E.A."/>
            <person name="Caruso L."/>
            <person name="Cedroni M."/>
            <person name="Cotton M."/>
            <person name="Davidson T."/>
            <person name="Desai A."/>
            <person name="Elliott G."/>
            <person name="Erb T."/>
            <person name="Fronick C."/>
            <person name="Gaige T."/>
            <person name="Haakenson W."/>
            <person name="Haglund K."/>
            <person name="Holmes A."/>
            <person name="Harkins R."/>
            <person name="Kim K."/>
            <person name="Kruchowski S.S."/>
            <person name="Strong C.M."/>
            <person name="Grewal N."/>
            <person name="Goyea E."/>
            <person name="Hou S."/>
            <person name="Levy A."/>
            <person name="Martinka S."/>
            <person name="Mead K."/>
            <person name="McLellan M.D."/>
            <person name="Meyer R."/>
            <person name="Randall-Maher J."/>
            <person name="Tomlinson C."/>
            <person name="Dauphin-Kohlberg S."/>
            <person name="Kozlowicz-Reilly A."/>
            <person name="Shah N."/>
            <person name="Swearengen-Shahid S."/>
            <person name="Snider J."/>
            <person name="Strong J.T."/>
            <person name="Thompson J."/>
            <person name="Yoakum M."/>
            <person name="Leonard S."/>
            <person name="Pearman C."/>
            <person name="Trani L."/>
            <person name="Radionenko M."/>
            <person name="Waligorski J.E."/>
            <person name="Wang C."/>
            <person name="Rock S.M."/>
            <person name="Tin-Wollam A.-M."/>
            <person name="Maupin R."/>
            <person name="Latreille P."/>
            <person name="Wendl M.C."/>
            <person name="Yang S.-P."/>
            <person name="Pohl C."/>
            <person name="Wallis J.W."/>
            <person name="Spieth J."/>
            <person name="Bieri T.A."/>
            <person name="Berkowicz N."/>
            <person name="Nelson J.O."/>
            <person name="Osborne J."/>
            <person name="Ding L."/>
            <person name="Meyer R."/>
            <person name="Sabo A."/>
            <person name="Shotland Y."/>
            <person name="Sinha P."/>
            <person name="Wohldmann P.E."/>
            <person name="Cook L.L."/>
            <person name="Hickenbotham M.T."/>
            <person name="Eldred J."/>
            <person name="Williams D."/>
            <person name="Jones T.A."/>
            <person name="She X."/>
            <person name="Ciccarelli F.D."/>
            <person name="Izaurralde E."/>
            <person name="Taylor J."/>
            <person name="Schmutz J."/>
            <person name="Myers R.M."/>
            <person name="Cox D.R."/>
            <person name="Huang X."/>
            <person name="McPherson J.D."/>
            <person name="Mardis E.R."/>
            <person name="Clifton S.W."/>
            <person name="Warren W.C."/>
            <person name="Chinwalla A.T."/>
            <person name="Eddy S.R."/>
            <person name="Marra M.A."/>
            <person name="Ovcharenko I."/>
            <person name="Furey T.S."/>
            <person name="Miller W."/>
            <person name="Eichler E.E."/>
            <person name="Bork P."/>
            <person name="Suyama M."/>
            <person name="Torrents D."/>
            <person name="Waterston R.H."/>
            <person name="Wilson R.K."/>
        </authorList>
    </citation>
    <scope>NUCLEOTIDE SEQUENCE [LARGE SCALE GENOMIC DNA]</scope>
</reference>
<reference key="8">
    <citation type="submission" date="2005-09" db="EMBL/GenBank/DDBJ databases">
        <authorList>
            <person name="Mural R.J."/>
            <person name="Istrail S."/>
            <person name="Sutton G.G."/>
            <person name="Florea L."/>
            <person name="Halpern A.L."/>
            <person name="Mobarry C.M."/>
            <person name="Lippert R."/>
            <person name="Walenz B."/>
            <person name="Shatkay H."/>
            <person name="Dew I."/>
            <person name="Miller J.R."/>
            <person name="Flanigan M.J."/>
            <person name="Edwards N.J."/>
            <person name="Bolanos R."/>
            <person name="Fasulo D."/>
            <person name="Halldorsson B.V."/>
            <person name="Hannenhalli S."/>
            <person name="Turner R."/>
            <person name="Yooseph S."/>
            <person name="Lu F."/>
            <person name="Nusskern D.R."/>
            <person name="Shue B.C."/>
            <person name="Zheng X.H."/>
            <person name="Zhong F."/>
            <person name="Delcher A.L."/>
            <person name="Huson D.H."/>
            <person name="Kravitz S.A."/>
            <person name="Mouchard L."/>
            <person name="Reinert K."/>
            <person name="Remington K.A."/>
            <person name="Clark A.G."/>
            <person name="Waterman M.S."/>
            <person name="Eichler E.E."/>
            <person name="Adams M.D."/>
            <person name="Hunkapiller M.W."/>
            <person name="Myers E.W."/>
            <person name="Venter J.C."/>
        </authorList>
    </citation>
    <scope>NUCLEOTIDE SEQUENCE [LARGE SCALE GENOMIC DNA]</scope>
</reference>
<reference key="9">
    <citation type="journal article" date="2004" name="Genome Res.">
        <title>The status, quality, and expansion of the NIH full-length cDNA project: the Mammalian Gene Collection (MGC).</title>
        <authorList>
            <consortium name="The MGC Project Team"/>
        </authorList>
    </citation>
    <scope>NUCLEOTIDE SEQUENCE [LARGE SCALE MRNA] (ISOFORM 1)</scope>
    <source>
        <tissue>Uterus</tissue>
    </source>
</reference>
<reference key="10">
    <citation type="journal article" date="2003" name="Cell">
        <title>The protein network of HIV budding.</title>
        <authorList>
            <person name="von Schwedler U.K."/>
            <person name="Stuchell M."/>
            <person name="Mueller B."/>
            <person name="Ward D.M."/>
            <person name="Chung H.-Y."/>
            <person name="Morita E."/>
            <person name="Wang H.E."/>
            <person name="Davis T."/>
            <person name="He G.P."/>
            <person name="Cimbora D.M."/>
            <person name="Scott A."/>
            <person name="Kraeusslich H.-G."/>
            <person name="Kaplan J."/>
            <person name="Morham S.G."/>
            <person name="Sundquist W.I."/>
        </authorList>
    </citation>
    <scope>FUNCTION IN HIV-1 BUDDING</scope>
    <scope>INTERACTION WITH CHMP4A</scope>
</reference>
<reference key="11">
    <citation type="journal article" date="2003" name="Proc. Natl. Acad. Sci. U.S.A.">
        <title>Divergent retroviral late-budding domains recruit vacuolar protein sorting factors by using alternative adaptor proteins.</title>
        <authorList>
            <person name="Martin-Serrano J."/>
            <person name="Yarovoy A."/>
            <person name="Perez-Caballero D."/>
            <person name="Bieniasz P.D."/>
        </authorList>
    </citation>
    <scope>INTERACTION WITH CHMP2A AND VPS4A</scope>
</reference>
<reference key="12">
    <citation type="journal article" date="2003" name="Proc. Natl. Acad. Sci. U.S.A.">
        <authorList>
            <person name="Martin-Serrano J."/>
            <person name="Yarovoy A."/>
            <person name="Perez-Caballero D."/>
            <person name="Bieniasz P.D."/>
        </authorList>
    </citation>
    <scope>ERRATUM OF PUBMED:14519844</scope>
</reference>
<reference key="13">
    <citation type="journal article" date="2005" name="J. Biol. Chem.">
        <title>Interaction of the mammalian endosomal sorting complex required for transport (ESCRT) III protein hSnf7-1 with itself, membranes, and the AAA+ ATPase SKD1.</title>
        <authorList>
            <person name="Lin Y."/>
            <person name="Kimpler L.A."/>
            <person name="Naismith T.V."/>
            <person name="Lauer J.M."/>
            <person name="Hanson P.I."/>
        </authorList>
    </citation>
    <scope>TISSUE SPECIFICITY</scope>
</reference>
<reference key="14">
    <citation type="journal article" date="2006" name="Genomics">
        <title>A systematic analysis of human CHMP protein interactions: additional MIT domain-containing proteins bind to multiple components of the human ESCRT III complex.</title>
        <authorList>
            <person name="Tsang H.T.H."/>
            <person name="Connell J.W."/>
            <person name="Brown S.E."/>
            <person name="Thompson A."/>
            <person name="Reid E."/>
            <person name="Sanderson C.M."/>
        </authorList>
    </citation>
    <scope>SUBCELLULAR LOCATION</scope>
    <scope>INTERACTION WITH STAMBP</scope>
</reference>
<reference key="15">
    <citation type="journal article" date="2006" name="Proc. Natl. Acad. Sci. U.S.A.">
        <title>Release of autoinhibition converts ESCRT-III components into potent inhibitors of HIV-1 budding.</title>
        <authorList>
            <person name="Zamborlini A."/>
            <person name="Usami Y."/>
            <person name="Radoshitzky S.R."/>
            <person name="Popova E."/>
            <person name="Palu G."/>
            <person name="Goettlinger H."/>
        </authorList>
    </citation>
    <scope>AUTOINHIBITORY MECHANISM</scope>
    <scope>INTRAMOLECULAR INTERACTION</scope>
    <scope>INTERACTION WITH STAMBP AND VPS4A</scope>
    <scope>MUTAGENESIS OF 216-ARG-LEU-217; 221-ARG-SER-222 AND SER-222</scope>
</reference>
<reference key="16">
    <citation type="journal article" date="2007" name="J. Biol. Chem.">
        <title>Targeting of AMSH to endosomes is required for epidermal growth factor receptor degradation.</title>
        <authorList>
            <person name="Ma Y.M."/>
            <person name="Boucrot E."/>
            <person name="Villen J."/>
            <person name="Affar el B."/>
            <person name="Gygi S.P."/>
            <person name="Goettlinger H.G."/>
            <person name="Kirchhausen T."/>
        </authorList>
    </citation>
    <scope>INTERACTION WITH STAMBP</scope>
    <scope>IDENTIFICATION BY MASS SPECTROMETRY</scope>
</reference>
<reference key="17">
    <citation type="journal article" date="2007" name="Traffic">
        <title>Structure/function analysis of four core ESCRT-III proteins reveals common regulatory role for extreme C-terminal domain.</title>
        <authorList>
            <person name="Shim S."/>
            <person name="Kimpler L.A."/>
            <person name="Hanson P.I."/>
        </authorList>
    </citation>
    <scope>AUTOINHIBITORY MECHANISM</scope>
    <scope>INTERACTION WITH CHMP4A</scope>
    <scope>MUTAGENESIS OF 179-LYS--SER-222</scope>
</reference>
<reference key="18">
    <citation type="journal article" date="2008" name="Proc. Natl. Acad. Sci. U.S.A.">
        <title>A quantitative atlas of mitotic phosphorylation.</title>
        <authorList>
            <person name="Dephoure N."/>
            <person name="Zhou C."/>
            <person name="Villen J."/>
            <person name="Beausoleil S.A."/>
            <person name="Bakalarski C.E."/>
            <person name="Elledge S.J."/>
            <person name="Gygi S.P."/>
        </authorList>
    </citation>
    <scope>PHOSPHORYLATION [LARGE SCALE ANALYSIS] AT SER-200</scope>
    <scope>IDENTIFICATION BY MASS SPECTROMETRY [LARGE SCALE ANALYSIS]</scope>
    <source>
        <tissue>Cervix carcinoma</tissue>
    </source>
</reference>
<reference key="19">
    <citation type="journal article" date="2008" name="Science">
        <title>Helical structures of ESCRT-III are disassembled by VPS4.</title>
        <authorList>
            <person name="Lata S."/>
            <person name="Schoehn G."/>
            <person name="Jain A."/>
            <person name="Pires R."/>
            <person name="Piehler J."/>
            <person name="Goettlinger H.G."/>
            <person name="Weissenhorn W."/>
        </authorList>
    </citation>
    <scope>POLYMERIZATION WITH CHMP2A</scope>
    <scope>ELECTRON MICROSCOPY</scope>
</reference>
<reference key="20">
    <citation type="journal article" date="2008" name="Biochem. J.">
        <title>A dominant-negative ESCRT-III protein perturbs cytokinesis and trafficking to lysosomes.</title>
        <authorList>
            <person name="Dukes J.D."/>
            <person name="Richardson J.D."/>
            <person name="Simmons R."/>
            <person name="Whitley P."/>
        </authorList>
    </citation>
    <scope>FUNCTION IN CYTOKINESIS</scope>
    <scope>SUBCELLULAR LOCATION</scope>
</reference>
<reference key="21">
    <citation type="journal article" date="2008" name="J. Mol. Biol.">
        <title>Structural basis for autoinhibition of ESCRT-III CHMP3.</title>
        <authorList>
            <person name="Lata S."/>
            <person name="Roessle M."/>
            <person name="Solomons J."/>
            <person name="Jamin M."/>
            <person name="Goettlinger H.G."/>
            <person name="Svergun D.I."/>
            <person name="Weissenhorn W."/>
        </authorList>
    </citation>
    <scope>AUTOINHIBITORY MECHANISM</scope>
    <scope>INTERACTION WITH STAMBP</scope>
</reference>
<reference key="22">
    <citation type="journal article" date="2009" name="Sci. Signal.">
        <title>Quantitative phosphoproteomic analysis of T cell receptor signaling reveals system-wide modulation of protein-protein interactions.</title>
        <authorList>
            <person name="Mayya V."/>
            <person name="Lundgren D.H."/>
            <person name="Hwang S.-I."/>
            <person name="Rezaul K."/>
            <person name="Wu L."/>
            <person name="Eng J.K."/>
            <person name="Rodionov V."/>
            <person name="Han D.K."/>
        </authorList>
    </citation>
    <scope>PHOSPHORYLATION [LARGE SCALE ANALYSIS] AT SER-200</scope>
    <scope>IDENTIFICATION BY MASS SPECTROMETRY [LARGE SCALE ANALYSIS]</scope>
    <source>
        <tissue>Leukemic T-cell</tissue>
    </source>
</reference>
<reference key="23">
    <citation type="journal article" date="2010" name="Sci. Signal.">
        <title>Quantitative phosphoproteomics reveals widespread full phosphorylation site occupancy during mitosis.</title>
        <authorList>
            <person name="Olsen J.V."/>
            <person name="Vermeulen M."/>
            <person name="Santamaria A."/>
            <person name="Kumar C."/>
            <person name="Miller M.L."/>
            <person name="Jensen L.J."/>
            <person name="Gnad F."/>
            <person name="Cox J."/>
            <person name="Jensen T.S."/>
            <person name="Nigg E.A."/>
            <person name="Brunak S."/>
            <person name="Mann M."/>
        </authorList>
    </citation>
    <scope>PHOSPHORYLATION [LARGE SCALE ANALYSIS] AT SER-200</scope>
    <scope>IDENTIFICATION BY MASS SPECTROMETRY [LARGE SCALE ANALYSIS]</scope>
    <source>
        <tissue>Cervix carcinoma</tissue>
    </source>
</reference>
<reference key="24">
    <citation type="journal article" date="2011" name="BMC Syst. Biol.">
        <title>Initial characterization of the human central proteome.</title>
        <authorList>
            <person name="Burkard T.R."/>
            <person name="Planyavsky M."/>
            <person name="Kaupe I."/>
            <person name="Breitwieser F.P."/>
            <person name="Buerckstuemmer T."/>
            <person name="Bennett K.L."/>
            <person name="Superti-Furga G."/>
            <person name="Colinge J."/>
        </authorList>
    </citation>
    <scope>IDENTIFICATION BY MASS SPECTROMETRY [LARGE SCALE ANALYSIS]</scope>
</reference>
<reference key="25">
    <citation type="journal article" date="2011" name="J. Virol.">
        <title>Mechanism of inhibition of retrovirus release from cells by interferon-induced gene ISG15.</title>
        <authorList>
            <person name="Kuang Z."/>
            <person name="Seo E.J."/>
            <person name="Leis J."/>
        </authorList>
    </citation>
    <scope>INTERACTION WITH VTA1 AND VPS4A</scope>
</reference>
<reference key="26">
    <citation type="journal article" date="2011" name="Sci. Signal.">
        <title>System-wide temporal characterization of the proteome and phosphoproteome of human embryonic stem cell differentiation.</title>
        <authorList>
            <person name="Rigbolt K.T."/>
            <person name="Prokhorova T.A."/>
            <person name="Akimov V."/>
            <person name="Henningsen J."/>
            <person name="Johansen P.T."/>
            <person name="Kratchmarova I."/>
            <person name="Kassem M."/>
            <person name="Mann M."/>
            <person name="Olsen J.V."/>
            <person name="Blagoev B."/>
        </authorList>
    </citation>
    <scope>PHOSPHORYLATION [LARGE SCALE ANALYSIS] AT SER-200</scope>
    <scope>IDENTIFICATION BY MASS SPECTROMETRY [LARGE SCALE ANALYSIS]</scope>
</reference>
<reference key="27">
    <citation type="journal article" date="2013" name="J. Proteome Res.">
        <title>Toward a comprehensive characterization of a human cancer cell phosphoproteome.</title>
        <authorList>
            <person name="Zhou H."/>
            <person name="Di Palma S."/>
            <person name="Preisinger C."/>
            <person name="Peng M."/>
            <person name="Polat A.N."/>
            <person name="Heck A.J."/>
            <person name="Mohammed S."/>
        </authorList>
    </citation>
    <scope>PHOSPHORYLATION [LARGE SCALE ANALYSIS] AT SER-200</scope>
    <scope>IDENTIFICATION BY MASS SPECTROMETRY [LARGE SCALE ANALYSIS]</scope>
    <source>
        <tissue>Cervix carcinoma</tissue>
        <tissue>Erythroleukemia</tissue>
    </source>
</reference>
<reference key="28">
    <citation type="journal article" date="2006" name="Dev. Cell">
        <title>Structural basis for budding by the ESCRT-III factor CHMP3.</title>
        <authorList>
            <person name="Muziol T."/>
            <person name="Pineda-Molina E."/>
            <person name="Ravelli R.B."/>
            <person name="Zamborlini A."/>
            <person name="Usami Y."/>
            <person name="Goettlinger H."/>
            <person name="Weissenhorn W."/>
        </authorList>
    </citation>
    <scope>X-RAY CRYSTALLOGRAPHY (2.8 ANGSTROMS) OF 5-183</scope>
    <scope>SUBUNIT</scope>
    <scope>FUNCTION IN HIV-1 BUDDING</scope>
    <scope>MUTAGENESIS OF 24-ARG-LYS-25; ARG-28; LYS-54; GLN-56; VAL-59; 62-VAL-LEU-63 AND 78-TYR-ALA-79</scope>
</reference>
<reference key="29">
    <citation type="journal article" date="2009" name="Nat. Struct. Mol. Biol.">
        <title>Structural basis for ESCRT-III protein autoinhibition.</title>
        <authorList>
            <person name="Bajorek M."/>
            <person name="Schubert H.L."/>
            <person name="McCullough J."/>
            <person name="Langelier C."/>
            <person name="Eckert D.M."/>
            <person name="Stubblefield W.M."/>
            <person name="Uter N.T."/>
            <person name="Myszka D.G."/>
            <person name="Hill C.P."/>
            <person name="Sundquist W.I."/>
        </authorList>
    </citation>
    <scope>X-RAY CRYSTALLOGRAPHY (3.70 ANGSTROMS) OF 1-222</scope>
    <scope>INTERACTION WITH CHMP2A</scope>
    <scope>MUTAGENESIS OF VAL-48; VAL-59; VAL-62; ALA-64 AND 168-ILE-LEU-169</scope>
</reference>
<reference key="30">
    <citation type="journal article" date="2011" name="Structure">
        <title>Structural basis for Escrt-III Chmp3 recruitment of Amsh.</title>
        <authorList>
            <person name="Solomons J."/>
            <person name="Sabin C."/>
            <person name="Poudevigne E."/>
            <person name="Usami Y."/>
            <person name="Hulsik D.L."/>
            <person name="Macheboeuf P."/>
            <person name="Hartlieb B."/>
            <person name="Gottlinger H."/>
            <person name="Weissenhorn W."/>
        </authorList>
    </citation>
    <scope>X-RAY CRYSTALLOGRAPHY (1.75 ANGSTROMS) OF 183-222 IN COMPLEX WITH STAMBP FRAGMENT</scope>
</reference>